<evidence type="ECO:0000255" key="1">
    <source>
        <dbReference type="HAMAP-Rule" id="MF_00046"/>
    </source>
</evidence>
<dbReference type="EC" id="6.3.2.8" evidence="1"/>
<dbReference type="EMBL" id="AM942759">
    <property type="protein sequence ID" value="CAR44145.1"/>
    <property type="molecule type" value="Genomic_DNA"/>
</dbReference>
<dbReference type="RefSeq" id="WP_004244115.1">
    <property type="nucleotide sequence ID" value="NC_010554.1"/>
</dbReference>
<dbReference type="SMR" id="B4F110"/>
<dbReference type="BindingDB" id="B4F110"/>
<dbReference type="EnsemblBacteria" id="CAR44145">
    <property type="protein sequence ID" value="CAR44145"/>
    <property type="gene ID" value="PMI2069"/>
</dbReference>
<dbReference type="GeneID" id="6800839"/>
<dbReference type="KEGG" id="pmr:PMI2069"/>
<dbReference type="eggNOG" id="COG0773">
    <property type="taxonomic scope" value="Bacteria"/>
</dbReference>
<dbReference type="HOGENOM" id="CLU_028104_2_2_6"/>
<dbReference type="UniPathway" id="UPA00219"/>
<dbReference type="Proteomes" id="UP000008319">
    <property type="component" value="Chromosome"/>
</dbReference>
<dbReference type="GO" id="GO:0005737">
    <property type="term" value="C:cytoplasm"/>
    <property type="evidence" value="ECO:0007669"/>
    <property type="project" value="UniProtKB-SubCell"/>
</dbReference>
<dbReference type="GO" id="GO:0005524">
    <property type="term" value="F:ATP binding"/>
    <property type="evidence" value="ECO:0007669"/>
    <property type="project" value="UniProtKB-UniRule"/>
</dbReference>
<dbReference type="GO" id="GO:0008763">
    <property type="term" value="F:UDP-N-acetylmuramate-L-alanine ligase activity"/>
    <property type="evidence" value="ECO:0007669"/>
    <property type="project" value="UniProtKB-UniRule"/>
</dbReference>
<dbReference type="GO" id="GO:0051301">
    <property type="term" value="P:cell division"/>
    <property type="evidence" value="ECO:0007669"/>
    <property type="project" value="UniProtKB-KW"/>
</dbReference>
<dbReference type="GO" id="GO:0071555">
    <property type="term" value="P:cell wall organization"/>
    <property type="evidence" value="ECO:0007669"/>
    <property type="project" value="UniProtKB-KW"/>
</dbReference>
<dbReference type="GO" id="GO:0009252">
    <property type="term" value="P:peptidoglycan biosynthetic process"/>
    <property type="evidence" value="ECO:0007669"/>
    <property type="project" value="UniProtKB-UniRule"/>
</dbReference>
<dbReference type="GO" id="GO:0008360">
    <property type="term" value="P:regulation of cell shape"/>
    <property type="evidence" value="ECO:0007669"/>
    <property type="project" value="UniProtKB-KW"/>
</dbReference>
<dbReference type="FunFam" id="3.40.1190.10:FF:000001">
    <property type="entry name" value="UDP-N-acetylmuramate--L-alanine ligase"/>
    <property type="match status" value="1"/>
</dbReference>
<dbReference type="FunFam" id="3.40.50.720:FF:000046">
    <property type="entry name" value="UDP-N-acetylmuramate--L-alanine ligase"/>
    <property type="match status" value="1"/>
</dbReference>
<dbReference type="FunFam" id="3.90.190.20:FF:000001">
    <property type="entry name" value="UDP-N-acetylmuramate--L-alanine ligase"/>
    <property type="match status" value="1"/>
</dbReference>
<dbReference type="Gene3D" id="3.90.190.20">
    <property type="entry name" value="Mur ligase, C-terminal domain"/>
    <property type="match status" value="1"/>
</dbReference>
<dbReference type="Gene3D" id="3.40.1190.10">
    <property type="entry name" value="Mur-like, catalytic domain"/>
    <property type="match status" value="1"/>
</dbReference>
<dbReference type="Gene3D" id="3.40.50.720">
    <property type="entry name" value="NAD(P)-binding Rossmann-like Domain"/>
    <property type="match status" value="1"/>
</dbReference>
<dbReference type="HAMAP" id="MF_00046">
    <property type="entry name" value="MurC"/>
    <property type="match status" value="1"/>
</dbReference>
<dbReference type="InterPro" id="IPR036565">
    <property type="entry name" value="Mur-like_cat_sf"/>
</dbReference>
<dbReference type="InterPro" id="IPR004101">
    <property type="entry name" value="Mur_ligase_C"/>
</dbReference>
<dbReference type="InterPro" id="IPR036615">
    <property type="entry name" value="Mur_ligase_C_dom_sf"/>
</dbReference>
<dbReference type="InterPro" id="IPR013221">
    <property type="entry name" value="Mur_ligase_cen"/>
</dbReference>
<dbReference type="InterPro" id="IPR000713">
    <property type="entry name" value="Mur_ligase_N"/>
</dbReference>
<dbReference type="InterPro" id="IPR050061">
    <property type="entry name" value="MurCDEF_pg_biosynth"/>
</dbReference>
<dbReference type="InterPro" id="IPR005758">
    <property type="entry name" value="UDP-N-AcMur_Ala_ligase_MurC"/>
</dbReference>
<dbReference type="NCBIfam" id="TIGR01082">
    <property type="entry name" value="murC"/>
    <property type="match status" value="1"/>
</dbReference>
<dbReference type="PANTHER" id="PTHR43445:SF3">
    <property type="entry name" value="UDP-N-ACETYLMURAMATE--L-ALANINE LIGASE"/>
    <property type="match status" value="1"/>
</dbReference>
<dbReference type="PANTHER" id="PTHR43445">
    <property type="entry name" value="UDP-N-ACETYLMURAMATE--L-ALANINE LIGASE-RELATED"/>
    <property type="match status" value="1"/>
</dbReference>
<dbReference type="Pfam" id="PF01225">
    <property type="entry name" value="Mur_ligase"/>
    <property type="match status" value="1"/>
</dbReference>
<dbReference type="Pfam" id="PF02875">
    <property type="entry name" value="Mur_ligase_C"/>
    <property type="match status" value="1"/>
</dbReference>
<dbReference type="Pfam" id="PF08245">
    <property type="entry name" value="Mur_ligase_M"/>
    <property type="match status" value="1"/>
</dbReference>
<dbReference type="SUPFAM" id="SSF51984">
    <property type="entry name" value="MurCD N-terminal domain"/>
    <property type="match status" value="1"/>
</dbReference>
<dbReference type="SUPFAM" id="SSF53623">
    <property type="entry name" value="MurD-like peptide ligases, catalytic domain"/>
    <property type="match status" value="1"/>
</dbReference>
<dbReference type="SUPFAM" id="SSF53244">
    <property type="entry name" value="MurD-like peptide ligases, peptide-binding domain"/>
    <property type="match status" value="1"/>
</dbReference>
<feature type="chain" id="PRO_1000091123" description="UDP-N-acetylmuramate--L-alanine ligase">
    <location>
        <begin position="1"/>
        <end position="487"/>
    </location>
</feature>
<feature type="binding site" evidence="1">
    <location>
        <begin position="126"/>
        <end position="132"/>
    </location>
    <ligand>
        <name>ATP</name>
        <dbReference type="ChEBI" id="CHEBI:30616"/>
    </ligand>
</feature>
<keyword id="KW-0067">ATP-binding</keyword>
<keyword id="KW-0131">Cell cycle</keyword>
<keyword id="KW-0132">Cell division</keyword>
<keyword id="KW-0133">Cell shape</keyword>
<keyword id="KW-0961">Cell wall biogenesis/degradation</keyword>
<keyword id="KW-0963">Cytoplasm</keyword>
<keyword id="KW-0436">Ligase</keyword>
<keyword id="KW-0547">Nucleotide-binding</keyword>
<keyword id="KW-0573">Peptidoglycan synthesis</keyword>
<keyword id="KW-1185">Reference proteome</keyword>
<reference key="1">
    <citation type="journal article" date="2008" name="J. Bacteriol.">
        <title>Complete genome sequence of uropathogenic Proteus mirabilis, a master of both adherence and motility.</title>
        <authorList>
            <person name="Pearson M.M."/>
            <person name="Sebaihia M."/>
            <person name="Churcher C."/>
            <person name="Quail M.A."/>
            <person name="Seshasayee A.S."/>
            <person name="Luscombe N.M."/>
            <person name="Abdellah Z."/>
            <person name="Arrosmith C."/>
            <person name="Atkin B."/>
            <person name="Chillingworth T."/>
            <person name="Hauser H."/>
            <person name="Jagels K."/>
            <person name="Moule S."/>
            <person name="Mungall K."/>
            <person name="Norbertczak H."/>
            <person name="Rabbinowitsch E."/>
            <person name="Walker D."/>
            <person name="Whithead S."/>
            <person name="Thomson N.R."/>
            <person name="Rather P.N."/>
            <person name="Parkhill J."/>
            <person name="Mobley H.L.T."/>
        </authorList>
    </citation>
    <scope>NUCLEOTIDE SEQUENCE [LARGE SCALE GENOMIC DNA]</scope>
    <source>
        <strain>HI4320</strain>
    </source>
</reference>
<proteinExistence type="inferred from homology"/>
<organism>
    <name type="scientific">Proteus mirabilis (strain HI4320)</name>
    <dbReference type="NCBI Taxonomy" id="529507"/>
    <lineage>
        <taxon>Bacteria</taxon>
        <taxon>Pseudomonadati</taxon>
        <taxon>Pseudomonadota</taxon>
        <taxon>Gammaproteobacteria</taxon>
        <taxon>Enterobacterales</taxon>
        <taxon>Morganellaceae</taxon>
        <taxon>Proteus</taxon>
    </lineage>
</organism>
<accession>B4F110</accession>
<sequence>MNTQQLAKLRSFVPEMRKVRHIHFVGIGGAGMGGIAEVLANEGYAISGSDLAPNVVTQQLVALGATIYFNHRPENIRDASVVVVSTAISADNPEIIAAREARIPVIRRAEMLAELMRYRHGVAIAGTHGKTTTTAMISNIYAQAGLDPTFVNGGLVKSAGTHARLGCSRYLIAEADESDASFLHLQPMVAVVTNIEADHMDTYHGNFDNLKETFITFLHNLPFYGRAVMCIDDDVIRSIIPKVGRYITTYGFSEDADVRITHYEQKGAQGFFTISREDMPDLDVVLNAPGRHNALNATAAVAVATEEGIADEHILAALLNFQGTGRRFDFLGNFSLEHVNGQEGEVMLVDDYGHHPTEVDATIKAARAGWPDKRLVMLFQPHRYTRTRDLYEDFATVLNQVDILLLTDVYAAGEAPIPGADSRSLCRTIRQRGKLDPIWVSDVENISSILAGVLTDNDLVLVQGAGNIGKIARRLAETKLQPSLSED</sequence>
<gene>
    <name evidence="1" type="primary">murC</name>
    <name type="ordered locus">PMI2069</name>
</gene>
<protein>
    <recommendedName>
        <fullName evidence="1">UDP-N-acetylmuramate--L-alanine ligase</fullName>
        <ecNumber evidence="1">6.3.2.8</ecNumber>
    </recommendedName>
    <alternativeName>
        <fullName evidence="1">UDP-N-acetylmuramoyl-L-alanine synthetase</fullName>
    </alternativeName>
</protein>
<name>MURC_PROMH</name>
<comment type="function">
    <text evidence="1">Cell wall formation.</text>
</comment>
<comment type="catalytic activity">
    <reaction evidence="1">
        <text>UDP-N-acetyl-alpha-D-muramate + L-alanine + ATP = UDP-N-acetyl-alpha-D-muramoyl-L-alanine + ADP + phosphate + H(+)</text>
        <dbReference type="Rhea" id="RHEA:23372"/>
        <dbReference type="ChEBI" id="CHEBI:15378"/>
        <dbReference type="ChEBI" id="CHEBI:30616"/>
        <dbReference type="ChEBI" id="CHEBI:43474"/>
        <dbReference type="ChEBI" id="CHEBI:57972"/>
        <dbReference type="ChEBI" id="CHEBI:70757"/>
        <dbReference type="ChEBI" id="CHEBI:83898"/>
        <dbReference type="ChEBI" id="CHEBI:456216"/>
        <dbReference type="EC" id="6.3.2.8"/>
    </reaction>
</comment>
<comment type="pathway">
    <text evidence="1">Cell wall biogenesis; peptidoglycan biosynthesis.</text>
</comment>
<comment type="subcellular location">
    <subcellularLocation>
        <location evidence="1">Cytoplasm</location>
    </subcellularLocation>
</comment>
<comment type="similarity">
    <text evidence="1">Belongs to the MurCDEF family.</text>
</comment>